<keyword id="KW-0539">Nucleus</keyword>
<keyword id="KW-1185">Reference proteome</keyword>
<keyword id="KW-0677">Repeat</keyword>
<keyword id="KW-0690">Ribosome biogenesis</keyword>
<keyword id="KW-0698">rRNA processing</keyword>
<keyword id="KW-0853">WD repeat</keyword>
<proteinExistence type="inferred from homology"/>
<sequence>MELENDKTSSKQLQIRLVALNKRFDTSGNLLSLPSRFGCDELSETVHTLLSANDIEIPASVQFDFAINNDLLRDSLEGYVTSKNLSTESVIEVVYFQKEPPPDFLNTILHSDWIKSVRSKDDCILAGSLDGTARIWNMAGEEYAIFKGHESYVNGVEWISKDNNHATIVTASQDGTLRLWEWAIGTKSVECLCECKGHTQAVNAVTVNQSKTKICSVSSDKMIKIWSTDCSRKDDDTTHPIHKKMKTNQGLQKAVDKLPDITLSGHTDGIDAVVWPKEAEIITAGWDHRIKIWDTEVGVNKSDINVNKVVKGITCSPFQDLIAAGSFDEGIIRLYDPRVVGDQTVLKLTLKSHKNIVSSLCWSTTDEQQLVSGSFDNTVKLWDIRCNLAPLYSIEGHEDKVLAVDWSEPQYIVSGGADNRIQIYQREVAQRS</sequence>
<name>WDR12_TRIAD</name>
<accession>B3RQN1</accession>
<organism>
    <name type="scientific">Trichoplax adhaerens</name>
    <name type="common">Trichoplax reptans</name>
    <dbReference type="NCBI Taxonomy" id="10228"/>
    <lineage>
        <taxon>Eukaryota</taxon>
        <taxon>Metazoa</taxon>
        <taxon>Placozoa</taxon>
        <taxon>Uniplacotomia</taxon>
        <taxon>Trichoplacea</taxon>
        <taxon>Trichoplacidae</taxon>
        <taxon>Trichoplax</taxon>
    </lineage>
</organism>
<evidence type="ECO:0000255" key="1">
    <source>
        <dbReference type="HAMAP-Rule" id="MF_03029"/>
    </source>
</evidence>
<evidence type="ECO:0000305" key="2"/>
<feature type="chain" id="PRO_0000369569" description="Ribosome biogenesis protein WDR12 homolog">
    <location>
        <begin position="1"/>
        <end position="432"/>
    </location>
</feature>
<feature type="repeat" description="WD 1">
    <location>
        <begin position="109"/>
        <end position="146"/>
    </location>
</feature>
<feature type="repeat" description="WD 2">
    <location>
        <begin position="148"/>
        <end position="190"/>
    </location>
</feature>
<feature type="repeat" description="WD 3">
    <location>
        <begin position="197"/>
        <end position="236"/>
    </location>
</feature>
<feature type="repeat" description="WD 4">
    <location>
        <begin position="265"/>
        <end position="303"/>
    </location>
</feature>
<feature type="repeat" description="WD 5">
    <location>
        <begin position="305"/>
        <end position="345"/>
    </location>
</feature>
<feature type="repeat" description="WD 6">
    <location>
        <begin position="352"/>
        <end position="392"/>
    </location>
</feature>
<feature type="repeat" description="WD 7">
    <location>
        <begin position="396"/>
        <end position="432"/>
    </location>
</feature>
<feature type="region of interest" description="Ubiquitin-like (UBL) domain" evidence="1">
    <location>
        <begin position="13"/>
        <end position="97"/>
    </location>
</feature>
<reference key="1">
    <citation type="journal article" date="2008" name="Nature">
        <title>The Trichoplax genome and the nature of placozoans.</title>
        <authorList>
            <person name="Srivastava M."/>
            <person name="Begovic E."/>
            <person name="Chapman J."/>
            <person name="Putnam N.H."/>
            <person name="Hellsten U."/>
            <person name="Kawashima T."/>
            <person name="Kuo A."/>
            <person name="Mitros T."/>
            <person name="Salamov A."/>
            <person name="Carpenter M.L."/>
            <person name="Signorovitch A.Y."/>
            <person name="Moreno M.A."/>
            <person name="Kamm K."/>
            <person name="Grimwood J."/>
            <person name="Schmutz J."/>
            <person name="Shapiro H."/>
            <person name="Grigoriev I.V."/>
            <person name="Buss L.W."/>
            <person name="Schierwater B."/>
            <person name="Dellaporta S.L."/>
            <person name="Rokhsar D.S."/>
        </authorList>
    </citation>
    <scope>NUCLEOTIDE SEQUENCE [LARGE SCALE GENOMIC DNA]</scope>
    <source>
        <strain>Grell-BS-1999</strain>
    </source>
</reference>
<protein>
    <recommendedName>
        <fullName evidence="1">Ribosome biogenesis protein WDR12 homolog</fullName>
    </recommendedName>
</protein>
<comment type="function">
    <text evidence="1">Required for maturation of ribosomal RNAs and formation of the large ribosomal subunit.</text>
</comment>
<comment type="subcellular location">
    <subcellularLocation>
        <location evidence="1">Nucleus</location>
        <location evidence="1">Nucleolus</location>
    </subcellularLocation>
    <subcellularLocation>
        <location evidence="1">Nucleus</location>
        <location evidence="1">Nucleoplasm</location>
    </subcellularLocation>
</comment>
<comment type="similarity">
    <text evidence="1">Belongs to the WD repeat WDR12/YTM1 family.</text>
</comment>
<comment type="sequence caution" evidence="2">
    <conflict type="erroneous gene model prediction">
        <sequence resource="EMBL-CDS" id="EDV26724"/>
    </conflict>
</comment>
<dbReference type="EMBL" id="DS985243">
    <property type="protein sequence ID" value="EDV26724.1"/>
    <property type="status" value="ALT_SEQ"/>
    <property type="molecule type" value="Genomic_DNA"/>
</dbReference>
<dbReference type="RefSeq" id="XP_002110720.1">
    <property type="nucleotide sequence ID" value="XM_002110684.1"/>
</dbReference>
<dbReference type="SMR" id="B3RQN1"/>
<dbReference type="FunCoup" id="B3RQN1">
    <property type="interactions" value="1769"/>
</dbReference>
<dbReference type="STRING" id="10228.B3RQN1"/>
<dbReference type="GeneID" id="6751933"/>
<dbReference type="KEGG" id="tad:TRIADDRAFT_55049"/>
<dbReference type="CTD" id="6751933"/>
<dbReference type="eggNOG" id="KOG0313">
    <property type="taxonomic scope" value="Eukaryota"/>
</dbReference>
<dbReference type="InParanoid" id="B3RQN1"/>
<dbReference type="OrthoDB" id="10251381at2759"/>
<dbReference type="PhylomeDB" id="B3RQN1"/>
<dbReference type="Proteomes" id="UP000009022">
    <property type="component" value="Unassembled WGS sequence"/>
</dbReference>
<dbReference type="GO" id="GO:0005730">
    <property type="term" value="C:nucleolus"/>
    <property type="evidence" value="ECO:0007669"/>
    <property type="project" value="UniProtKB-SubCell"/>
</dbReference>
<dbReference type="GO" id="GO:0005654">
    <property type="term" value="C:nucleoplasm"/>
    <property type="evidence" value="ECO:0007669"/>
    <property type="project" value="UniProtKB-SubCell"/>
</dbReference>
<dbReference type="GO" id="GO:0030687">
    <property type="term" value="C:preribosome, large subunit precursor"/>
    <property type="evidence" value="ECO:0007669"/>
    <property type="project" value="UniProtKB-UniRule"/>
</dbReference>
<dbReference type="GO" id="GO:0043021">
    <property type="term" value="F:ribonucleoprotein complex binding"/>
    <property type="evidence" value="ECO:0007669"/>
    <property type="project" value="UniProtKB-UniRule"/>
</dbReference>
<dbReference type="GO" id="GO:0000466">
    <property type="term" value="P:maturation of 5.8S rRNA from tricistronic rRNA transcript (SSU-rRNA, 5.8S rRNA, LSU-rRNA)"/>
    <property type="evidence" value="ECO:0007669"/>
    <property type="project" value="UniProtKB-UniRule"/>
</dbReference>
<dbReference type="GO" id="GO:0000463">
    <property type="term" value="P:maturation of LSU-rRNA from tricistronic rRNA transcript (SSU-rRNA, 5.8S rRNA, LSU-rRNA)"/>
    <property type="evidence" value="ECO:0007669"/>
    <property type="project" value="UniProtKB-UniRule"/>
</dbReference>
<dbReference type="CDD" id="cd00200">
    <property type="entry name" value="WD40"/>
    <property type="match status" value="1"/>
</dbReference>
<dbReference type="FunFam" id="2.130.10.10:FF:002692">
    <property type="entry name" value="Ribosome biogenesis protein WDR12 homolog"/>
    <property type="match status" value="1"/>
</dbReference>
<dbReference type="Gene3D" id="2.130.10.10">
    <property type="entry name" value="YVTN repeat-like/Quinoprotein amine dehydrogenase"/>
    <property type="match status" value="1"/>
</dbReference>
<dbReference type="HAMAP" id="MF_03029">
    <property type="entry name" value="WDR12"/>
    <property type="match status" value="1"/>
</dbReference>
<dbReference type="InterPro" id="IPR020472">
    <property type="entry name" value="G-protein_beta_WD-40_rep"/>
</dbReference>
<dbReference type="InterPro" id="IPR012972">
    <property type="entry name" value="NLE"/>
</dbReference>
<dbReference type="InterPro" id="IPR015943">
    <property type="entry name" value="WD40/YVTN_repeat-like_dom_sf"/>
</dbReference>
<dbReference type="InterPro" id="IPR019775">
    <property type="entry name" value="WD40_repeat_CS"/>
</dbReference>
<dbReference type="InterPro" id="IPR036322">
    <property type="entry name" value="WD40_repeat_dom_sf"/>
</dbReference>
<dbReference type="InterPro" id="IPR001680">
    <property type="entry name" value="WD40_rpt"/>
</dbReference>
<dbReference type="InterPro" id="IPR028599">
    <property type="entry name" value="WDR12/Ytm1"/>
</dbReference>
<dbReference type="PANTHER" id="PTHR19855:SF11">
    <property type="entry name" value="RIBOSOME BIOGENESIS PROTEIN WDR12"/>
    <property type="match status" value="1"/>
</dbReference>
<dbReference type="PANTHER" id="PTHR19855">
    <property type="entry name" value="WD40 REPEAT PROTEIN 12, 37"/>
    <property type="match status" value="1"/>
</dbReference>
<dbReference type="Pfam" id="PF08154">
    <property type="entry name" value="NLE"/>
    <property type="match status" value="1"/>
</dbReference>
<dbReference type="Pfam" id="PF00400">
    <property type="entry name" value="WD40"/>
    <property type="match status" value="6"/>
</dbReference>
<dbReference type="PRINTS" id="PR00320">
    <property type="entry name" value="GPROTEINBRPT"/>
</dbReference>
<dbReference type="SMART" id="SM00320">
    <property type="entry name" value="WD40"/>
    <property type="match status" value="7"/>
</dbReference>
<dbReference type="SUPFAM" id="SSF50978">
    <property type="entry name" value="WD40 repeat-like"/>
    <property type="match status" value="1"/>
</dbReference>
<dbReference type="PROSITE" id="PS00678">
    <property type="entry name" value="WD_REPEATS_1"/>
    <property type="match status" value="3"/>
</dbReference>
<dbReference type="PROSITE" id="PS50082">
    <property type="entry name" value="WD_REPEATS_2"/>
    <property type="match status" value="5"/>
</dbReference>
<dbReference type="PROSITE" id="PS50294">
    <property type="entry name" value="WD_REPEATS_REGION"/>
    <property type="match status" value="1"/>
</dbReference>
<gene>
    <name type="ORF">TRIADDRAFT_55049</name>
</gene>